<comment type="function">
    <text evidence="1">Catalyzes the stereoinversion of LL-2,6-diaminopimelate (L,L-DAP) to meso-diaminopimelate (meso-DAP), a precursor of L-lysine and an essential component of the bacterial peptidoglycan.</text>
</comment>
<comment type="catalytic activity">
    <reaction evidence="1">
        <text>(2S,6S)-2,6-diaminopimelate = meso-2,6-diaminopimelate</text>
        <dbReference type="Rhea" id="RHEA:15393"/>
        <dbReference type="ChEBI" id="CHEBI:57609"/>
        <dbReference type="ChEBI" id="CHEBI:57791"/>
        <dbReference type="EC" id="5.1.1.7"/>
    </reaction>
</comment>
<comment type="pathway">
    <text evidence="1">Amino-acid biosynthesis; L-lysine biosynthesis via DAP pathway; DL-2,6-diaminopimelate from LL-2,6-diaminopimelate: step 1/1.</text>
</comment>
<comment type="subunit">
    <text evidence="1">Homodimer.</text>
</comment>
<comment type="subcellular location">
    <subcellularLocation>
        <location evidence="1">Cytoplasm</location>
    </subcellularLocation>
</comment>
<comment type="similarity">
    <text evidence="1">Belongs to the diaminopimelate epimerase family.</text>
</comment>
<organism>
    <name type="scientific">Caulobacter sp. (strain K31)</name>
    <dbReference type="NCBI Taxonomy" id="366602"/>
    <lineage>
        <taxon>Bacteria</taxon>
        <taxon>Pseudomonadati</taxon>
        <taxon>Pseudomonadota</taxon>
        <taxon>Alphaproteobacteria</taxon>
        <taxon>Caulobacterales</taxon>
        <taxon>Caulobacteraceae</taxon>
        <taxon>Caulobacter</taxon>
    </lineage>
</organism>
<dbReference type="EC" id="5.1.1.7" evidence="1"/>
<dbReference type="EMBL" id="CP000927">
    <property type="protein sequence ID" value="ABZ73988.1"/>
    <property type="molecule type" value="Genomic_DNA"/>
</dbReference>
<dbReference type="SMR" id="B0T542"/>
<dbReference type="STRING" id="366602.Caul_4868"/>
<dbReference type="KEGG" id="cak:Caul_4868"/>
<dbReference type="eggNOG" id="COG0253">
    <property type="taxonomic scope" value="Bacteria"/>
</dbReference>
<dbReference type="HOGENOM" id="CLU_053306_1_0_5"/>
<dbReference type="OrthoDB" id="9805408at2"/>
<dbReference type="UniPathway" id="UPA00034">
    <property type="reaction ID" value="UER00025"/>
</dbReference>
<dbReference type="GO" id="GO:0005829">
    <property type="term" value="C:cytosol"/>
    <property type="evidence" value="ECO:0007669"/>
    <property type="project" value="TreeGrafter"/>
</dbReference>
<dbReference type="GO" id="GO:0008837">
    <property type="term" value="F:diaminopimelate epimerase activity"/>
    <property type="evidence" value="ECO:0007669"/>
    <property type="project" value="UniProtKB-UniRule"/>
</dbReference>
<dbReference type="GO" id="GO:0009089">
    <property type="term" value="P:lysine biosynthetic process via diaminopimelate"/>
    <property type="evidence" value="ECO:0007669"/>
    <property type="project" value="UniProtKB-UniRule"/>
</dbReference>
<dbReference type="Gene3D" id="3.10.310.10">
    <property type="entry name" value="Diaminopimelate Epimerase, Chain A, domain 1"/>
    <property type="match status" value="2"/>
</dbReference>
<dbReference type="HAMAP" id="MF_00197">
    <property type="entry name" value="DAP_epimerase"/>
    <property type="match status" value="1"/>
</dbReference>
<dbReference type="InterPro" id="IPR018510">
    <property type="entry name" value="DAP_epimerase_AS"/>
</dbReference>
<dbReference type="InterPro" id="IPR001653">
    <property type="entry name" value="DAP_epimerase_DapF"/>
</dbReference>
<dbReference type="NCBIfam" id="TIGR00652">
    <property type="entry name" value="DapF"/>
    <property type="match status" value="1"/>
</dbReference>
<dbReference type="PANTHER" id="PTHR31689:SF0">
    <property type="entry name" value="DIAMINOPIMELATE EPIMERASE"/>
    <property type="match status" value="1"/>
</dbReference>
<dbReference type="PANTHER" id="PTHR31689">
    <property type="entry name" value="DIAMINOPIMELATE EPIMERASE, CHLOROPLASTIC"/>
    <property type="match status" value="1"/>
</dbReference>
<dbReference type="Pfam" id="PF01678">
    <property type="entry name" value="DAP_epimerase"/>
    <property type="match status" value="2"/>
</dbReference>
<dbReference type="SUPFAM" id="SSF54506">
    <property type="entry name" value="Diaminopimelate epimerase-like"/>
    <property type="match status" value="2"/>
</dbReference>
<dbReference type="PROSITE" id="PS01326">
    <property type="entry name" value="DAP_EPIMERASE"/>
    <property type="match status" value="1"/>
</dbReference>
<evidence type="ECO:0000255" key="1">
    <source>
        <dbReference type="HAMAP-Rule" id="MF_00197"/>
    </source>
</evidence>
<name>DAPF_CAUSK</name>
<feature type="chain" id="PRO_1000077693" description="Diaminopimelate epimerase">
    <location>
        <begin position="1"/>
        <end position="289"/>
    </location>
</feature>
<feature type="active site" description="Proton donor" evidence="1">
    <location>
        <position position="81"/>
    </location>
</feature>
<feature type="active site" description="Proton acceptor" evidence="1">
    <location>
        <position position="228"/>
    </location>
</feature>
<feature type="binding site" evidence="1">
    <location>
        <position position="13"/>
    </location>
    <ligand>
        <name>substrate</name>
    </ligand>
</feature>
<feature type="binding site" evidence="1">
    <location>
        <position position="52"/>
    </location>
    <ligand>
        <name>substrate</name>
    </ligand>
</feature>
<feature type="binding site" evidence="1">
    <location>
        <position position="72"/>
    </location>
    <ligand>
        <name>substrate</name>
    </ligand>
</feature>
<feature type="binding site" evidence="1">
    <location>
        <begin position="82"/>
        <end position="83"/>
    </location>
    <ligand>
        <name>substrate</name>
    </ligand>
</feature>
<feature type="binding site" evidence="1">
    <location>
        <position position="167"/>
    </location>
    <ligand>
        <name>substrate</name>
    </ligand>
</feature>
<feature type="binding site" evidence="1">
    <location>
        <position position="201"/>
    </location>
    <ligand>
        <name>substrate</name>
    </ligand>
</feature>
<feature type="binding site" evidence="1">
    <location>
        <begin position="219"/>
        <end position="220"/>
    </location>
    <ligand>
        <name>substrate</name>
    </ligand>
</feature>
<feature type="binding site" evidence="1">
    <location>
        <begin position="229"/>
        <end position="230"/>
    </location>
    <ligand>
        <name>substrate</name>
    </ligand>
</feature>
<feature type="site" description="Could be important to modulate the pK values of the two catalytic cysteine residues" evidence="1">
    <location>
        <position position="169"/>
    </location>
</feature>
<feature type="site" description="Could be important to modulate the pK values of the two catalytic cysteine residues" evidence="1">
    <location>
        <position position="219"/>
    </location>
</feature>
<gene>
    <name evidence="1" type="primary">dapF</name>
    <name type="ordered locus">Caul_4868</name>
</gene>
<protein>
    <recommendedName>
        <fullName evidence="1">Diaminopimelate epimerase</fullName>
        <shortName evidence="1">DAP epimerase</shortName>
        <ecNumber evidence="1">5.1.1.7</ecNumber>
    </recommendedName>
    <alternativeName>
        <fullName evidence="1">PLP-independent amino acid racemase</fullName>
    </alternativeName>
</protein>
<sequence length="289" mass="30572">MSRTFLKMNGLGNDFVVIETLTQPFHPTAEEIRAIAKRPNAKEGEGGIGCDQVIAIDPPRAEGASAYVRFWNSDGEETGACGNGTRCVAWLLMQSGQKDSVAFDTVAGRLSGKMAGDKLVTVDMGQPGLAWNQIPLAEEMDTVGIELQVGPIDAPLVHTPGCVSMGNPHVVFFVDAPVSDAFARGTGSLVEHHPLFPEGVNVGFAHIAARDHIKLKVWERGAGLTAACGTGACAAQVAAVRRGLTDRVAKVEFESGALTIEWREADGHVIMTGPVTMEFVGKLPEKVAA</sequence>
<accession>B0T542</accession>
<reference key="1">
    <citation type="submission" date="2008-01" db="EMBL/GenBank/DDBJ databases">
        <title>Complete sequence of chromosome of Caulobacter sp. K31.</title>
        <authorList>
            <consortium name="US DOE Joint Genome Institute"/>
            <person name="Copeland A."/>
            <person name="Lucas S."/>
            <person name="Lapidus A."/>
            <person name="Barry K."/>
            <person name="Glavina del Rio T."/>
            <person name="Dalin E."/>
            <person name="Tice H."/>
            <person name="Pitluck S."/>
            <person name="Bruce D."/>
            <person name="Goodwin L."/>
            <person name="Thompson L.S."/>
            <person name="Brettin T."/>
            <person name="Detter J.C."/>
            <person name="Han C."/>
            <person name="Schmutz J."/>
            <person name="Larimer F."/>
            <person name="Land M."/>
            <person name="Hauser L."/>
            <person name="Kyrpides N."/>
            <person name="Kim E."/>
            <person name="Stephens C."/>
            <person name="Richardson P."/>
        </authorList>
    </citation>
    <scope>NUCLEOTIDE SEQUENCE [LARGE SCALE GENOMIC DNA]</scope>
    <source>
        <strain>K31</strain>
    </source>
</reference>
<proteinExistence type="inferred from homology"/>
<keyword id="KW-0028">Amino-acid biosynthesis</keyword>
<keyword id="KW-0963">Cytoplasm</keyword>
<keyword id="KW-0413">Isomerase</keyword>
<keyword id="KW-0457">Lysine biosynthesis</keyword>